<evidence type="ECO:0000250" key="1"/>
<evidence type="ECO:0000255" key="2"/>
<evidence type="ECO:0000255" key="3">
    <source>
        <dbReference type="PROSITE-ProRule" id="PRU00102"/>
    </source>
</evidence>
<evidence type="ECO:0000269" key="4">
    <source>
    </source>
</evidence>
<evidence type="ECO:0000269" key="5">
    <source>
    </source>
</evidence>
<evidence type="ECO:0000305" key="6"/>
<comment type="function">
    <text evidence="4">Member of the three-protein two-component system HK1/HK2/TcrA. HK2 transfers its phosphoryl group to TcrA.</text>
</comment>
<comment type="catalytic activity">
    <reaction>
        <text>ATP + protein L-histidine = ADP + protein N-phospho-L-histidine.</text>
        <dbReference type="EC" id="2.7.13.3"/>
    </reaction>
</comment>
<comment type="subunit">
    <text evidence="5">Homodimer. Each monomer interacts with HK1 and the receiver domain of TcrA.</text>
</comment>
<comment type="subcellular location">
    <subcellularLocation>
        <location evidence="6">Cell membrane</location>
        <topology evidence="6">Single-pass membrane protein</topology>
    </subcellularLocation>
</comment>
<comment type="PTM">
    <text evidence="4">Phosphorylated by HK1.</text>
</comment>
<comment type="miscellaneous">
    <text>HK1 and HK2 are merged into a single protein with a distinct N-terminal sequence in strain CDC 1551 / Oshkosh.</text>
</comment>
<comment type="caution">
    <text evidence="6">HK1 and HK2 are incomplete as individual proteins but can complement each other's function.</text>
</comment>
<sequence>MALVLAAAGAVTVVQFRDAAHEADPDGALRGLTDDITADLVRELVTILPIVLVIAAVAAYLLSRAALRPVDRIRAAAQTLTTTPHPDTDAPLPVPPTDDEIAWLATTLNTMLTRLQRALAHEQQFVADASHELRTPLALLTTELELRCAGPDPPTS</sequence>
<dbReference type="EC" id="2.7.13.3"/>
<dbReference type="EMBL" id="AL123456">
    <property type="protein sequence ID" value="CCP43340.1"/>
    <property type="molecule type" value="Genomic_DNA"/>
</dbReference>
<dbReference type="PIR" id="D70909">
    <property type="entry name" value="D70909"/>
</dbReference>
<dbReference type="RefSeq" id="NP_215115.1">
    <property type="nucleotide sequence ID" value="NC_000962.3"/>
</dbReference>
<dbReference type="RefSeq" id="WP_003403144.1">
    <property type="nucleotide sequence ID" value="NC_000962.3"/>
</dbReference>
<dbReference type="SMR" id="O07777"/>
<dbReference type="FunCoup" id="O07777">
    <property type="interactions" value="1"/>
</dbReference>
<dbReference type="IntAct" id="O07777">
    <property type="interactions" value="1"/>
</dbReference>
<dbReference type="MINT" id="O07777"/>
<dbReference type="STRING" id="83332.Rv0601c"/>
<dbReference type="PaxDb" id="83332-Rv0601c"/>
<dbReference type="GeneID" id="887868"/>
<dbReference type="KEGG" id="mtu:Rv0601c"/>
<dbReference type="KEGG" id="mtv:RVBD_0601c"/>
<dbReference type="PATRIC" id="fig|83332.111.peg.664"/>
<dbReference type="TubercuList" id="Rv0601c"/>
<dbReference type="eggNOG" id="COG2972">
    <property type="taxonomic scope" value="Bacteria"/>
</dbReference>
<dbReference type="InParanoid" id="O07777"/>
<dbReference type="OrthoDB" id="9786919at2"/>
<dbReference type="Proteomes" id="UP000001584">
    <property type="component" value="Chromosome"/>
</dbReference>
<dbReference type="GO" id="GO:0005886">
    <property type="term" value="C:plasma membrane"/>
    <property type="evidence" value="ECO:0000318"/>
    <property type="project" value="GO_Central"/>
</dbReference>
<dbReference type="GO" id="GO:0000155">
    <property type="term" value="F:phosphorelay sensor kinase activity"/>
    <property type="evidence" value="ECO:0000314"/>
    <property type="project" value="MTBBASE"/>
</dbReference>
<dbReference type="GO" id="GO:0042803">
    <property type="term" value="F:protein homodimerization activity"/>
    <property type="evidence" value="ECO:0000353"/>
    <property type="project" value="MTBBASE"/>
</dbReference>
<dbReference type="GO" id="GO:0004672">
    <property type="term" value="F:protein kinase activity"/>
    <property type="evidence" value="ECO:0000314"/>
    <property type="project" value="MTBBASE"/>
</dbReference>
<dbReference type="GO" id="GO:0070298">
    <property type="term" value="P:negative regulation of phosphorelay signal transduction system"/>
    <property type="evidence" value="ECO:0000314"/>
    <property type="project" value="MTBBASE"/>
</dbReference>
<dbReference type="GO" id="GO:0000160">
    <property type="term" value="P:phosphorelay signal transduction system"/>
    <property type="evidence" value="ECO:0000318"/>
    <property type="project" value="GO_Central"/>
</dbReference>
<dbReference type="CDD" id="cd06225">
    <property type="entry name" value="HAMP"/>
    <property type="match status" value="1"/>
</dbReference>
<dbReference type="Gene3D" id="1.10.287.130">
    <property type="match status" value="1"/>
</dbReference>
<dbReference type="Gene3D" id="6.10.340.10">
    <property type="match status" value="1"/>
</dbReference>
<dbReference type="InterPro" id="IPR003660">
    <property type="entry name" value="HAMP_dom"/>
</dbReference>
<dbReference type="InterPro" id="IPR036097">
    <property type="entry name" value="HisK_dim/P_sf"/>
</dbReference>
<dbReference type="InterPro" id="IPR050428">
    <property type="entry name" value="TCS_sensor_his_kinase"/>
</dbReference>
<dbReference type="PANTHER" id="PTHR45436:SF5">
    <property type="entry name" value="SENSOR HISTIDINE KINASE TRCS"/>
    <property type="match status" value="1"/>
</dbReference>
<dbReference type="PANTHER" id="PTHR45436">
    <property type="entry name" value="SENSOR HISTIDINE KINASE YKOH"/>
    <property type="match status" value="1"/>
</dbReference>
<dbReference type="Pfam" id="PF00672">
    <property type="entry name" value="HAMP"/>
    <property type="match status" value="1"/>
</dbReference>
<dbReference type="SMART" id="SM00304">
    <property type="entry name" value="HAMP"/>
    <property type="match status" value="1"/>
</dbReference>
<dbReference type="SUPFAM" id="SSF158472">
    <property type="entry name" value="HAMP domain-like"/>
    <property type="match status" value="1"/>
</dbReference>
<dbReference type="SUPFAM" id="SSF47384">
    <property type="entry name" value="Homodimeric domain of signal transducing histidine kinase"/>
    <property type="match status" value="1"/>
</dbReference>
<dbReference type="PROSITE" id="PS50885">
    <property type="entry name" value="HAMP"/>
    <property type="match status" value="1"/>
</dbReference>
<accession>O07777</accession>
<accession>L0T462</accession>
<gene>
    <name type="ordered locus">Rv0601c</name>
</gene>
<proteinExistence type="evidence at protein level"/>
<reference key="1">
    <citation type="journal article" date="1998" name="Nature">
        <title>Deciphering the biology of Mycobacterium tuberculosis from the complete genome sequence.</title>
        <authorList>
            <person name="Cole S.T."/>
            <person name="Brosch R."/>
            <person name="Parkhill J."/>
            <person name="Garnier T."/>
            <person name="Churcher C.M."/>
            <person name="Harris D.E."/>
            <person name="Gordon S.V."/>
            <person name="Eiglmeier K."/>
            <person name="Gas S."/>
            <person name="Barry C.E. III"/>
            <person name="Tekaia F."/>
            <person name="Badcock K."/>
            <person name="Basham D."/>
            <person name="Brown D."/>
            <person name="Chillingworth T."/>
            <person name="Connor R."/>
            <person name="Davies R.M."/>
            <person name="Devlin K."/>
            <person name="Feltwell T."/>
            <person name="Gentles S."/>
            <person name="Hamlin N."/>
            <person name="Holroyd S."/>
            <person name="Hornsby T."/>
            <person name="Jagels K."/>
            <person name="Krogh A."/>
            <person name="McLean J."/>
            <person name="Moule S."/>
            <person name="Murphy L.D."/>
            <person name="Oliver S."/>
            <person name="Osborne J."/>
            <person name="Quail M.A."/>
            <person name="Rajandream M.A."/>
            <person name="Rogers J."/>
            <person name="Rutter S."/>
            <person name="Seeger K."/>
            <person name="Skelton S."/>
            <person name="Squares S."/>
            <person name="Squares R."/>
            <person name="Sulston J.E."/>
            <person name="Taylor K."/>
            <person name="Whitehead S."/>
            <person name="Barrell B.G."/>
        </authorList>
    </citation>
    <scope>NUCLEOTIDE SEQUENCE [LARGE SCALE GENOMIC DNA]</scope>
    <source>
        <strain>ATCC 25618 / H37Rv</strain>
    </source>
</reference>
<reference key="2">
    <citation type="journal article" date="2007" name="FEBS Lett.">
        <title>Probing the nucleotide binding and phosphorylation by the histidine kinase of a novel three-protein two-component system from Mycobacterium tuberculosis.</title>
        <authorList>
            <person name="Shrivastava R."/>
            <person name="Ghosh A.K."/>
            <person name="Das A.K."/>
        </authorList>
    </citation>
    <scope>FUNCTION</scope>
    <scope>PHOSPHORYLATION</scope>
    <source>
        <strain>ATCC 25618 / H37Rv</strain>
    </source>
</reference>
<reference key="3">
    <citation type="journal article" date="2009" name="Microbiology">
        <title>Intra- and intermolecular domain interactions among novel two-component system proteins coded by Rv0600c, Rv0601c and Rv0602c of Mycobacterium tuberculosis.</title>
        <authorList>
            <person name="Shrivastava R."/>
            <person name="Ghosh A.K."/>
            <person name="Das A.K."/>
        </authorList>
    </citation>
    <scope>SUBUNIT</scope>
    <scope>INTERACTION WITH HK1 AND TCRA</scope>
    <source>
        <strain>ATCC 25618 / H37Rv</strain>
    </source>
</reference>
<organism>
    <name type="scientific">Mycobacterium tuberculosis (strain ATCC 25618 / H37Rv)</name>
    <dbReference type="NCBI Taxonomy" id="83332"/>
    <lineage>
        <taxon>Bacteria</taxon>
        <taxon>Bacillati</taxon>
        <taxon>Actinomycetota</taxon>
        <taxon>Actinomycetes</taxon>
        <taxon>Mycobacteriales</taxon>
        <taxon>Mycobacteriaceae</taxon>
        <taxon>Mycobacterium</taxon>
        <taxon>Mycobacterium tuberculosis complex</taxon>
    </lineage>
</organism>
<keyword id="KW-1003">Cell membrane</keyword>
<keyword id="KW-0418">Kinase</keyword>
<keyword id="KW-0472">Membrane</keyword>
<keyword id="KW-0597">Phosphoprotein</keyword>
<keyword id="KW-1185">Reference proteome</keyword>
<keyword id="KW-0808">Transferase</keyword>
<keyword id="KW-0812">Transmembrane</keyword>
<keyword id="KW-1133">Transmembrane helix</keyword>
<keyword id="KW-0902">Two-component regulatory system</keyword>
<feature type="chain" id="PRO_0000391080" description="Sensor histidine kinase component HK2">
    <location>
        <begin position="1"/>
        <end position="156"/>
    </location>
</feature>
<feature type="topological domain" description="Extracellular" evidence="2">
    <location>
        <begin position="1"/>
        <end position="42"/>
    </location>
</feature>
<feature type="transmembrane region" description="Helical" evidence="2">
    <location>
        <begin position="43"/>
        <end position="63"/>
    </location>
</feature>
<feature type="topological domain" description="Cytoplasmic" evidence="2">
    <location>
        <begin position="64"/>
        <end position="156"/>
    </location>
</feature>
<feature type="domain" description="HAMP" evidence="3">
    <location>
        <begin position="64"/>
        <end position="120"/>
    </location>
</feature>
<feature type="domain" description="Histidine kinase; first part">
    <location>
        <begin position="128"/>
        <end position="156"/>
    </location>
</feature>
<feature type="modified residue" description="Phosphohistidine; by autocatalysis" evidence="1">
    <location>
        <position position="131"/>
    </location>
</feature>
<protein>
    <recommendedName>
        <fullName>Sensor histidine kinase component HK2</fullName>
        <ecNumber>2.7.13.3</ecNumber>
    </recommendedName>
</protein>
<name>HK2_MYCTU</name>